<evidence type="ECO:0000255" key="1">
    <source>
        <dbReference type="HAMAP-Rule" id="MF_01963"/>
    </source>
</evidence>
<reference key="1">
    <citation type="journal article" date="2003" name="DNA Res.">
        <title>Complete genome structure of Gloeobacter violaceus PCC 7421, a cyanobacterium that lacks thylakoids.</title>
        <authorList>
            <person name="Nakamura Y."/>
            <person name="Kaneko T."/>
            <person name="Sato S."/>
            <person name="Mimuro M."/>
            <person name="Miyashita H."/>
            <person name="Tsuchiya T."/>
            <person name="Sasamoto S."/>
            <person name="Watanabe A."/>
            <person name="Kawashima K."/>
            <person name="Kishida Y."/>
            <person name="Kiyokawa C."/>
            <person name="Kohara M."/>
            <person name="Matsumoto M."/>
            <person name="Matsuno A."/>
            <person name="Nakazaki N."/>
            <person name="Shimpo S."/>
            <person name="Takeuchi C."/>
            <person name="Yamada M."/>
            <person name="Tabata S."/>
        </authorList>
    </citation>
    <scope>NUCLEOTIDE SEQUENCE [LARGE SCALE GENOMIC DNA]</scope>
    <source>
        <strain>ATCC 29082 / PCC 7421</strain>
    </source>
</reference>
<sequence>MSYPQARIGVIGGSGLYQMADLADTVEVQFNTPFGPPSDALVIGTLAGERVAFLPRHGRGHRLLPAELPFQANIYAMKMLGVEYLLSASAVGSLREEYRPRDIVFPDQFFDRTKDRPSTFFGGGLVAHIGFDQPICTELAHLAAEAARGVELIGETRIHTGGTYVCMEGPAFSTLAESRLYRSWGMDIIGMTNLQEAKLAREAEICYATMALVTDYDCWHPDHGAVTVELIIDNLHKNAENAQRIVRAVVERLHAAAPPCASHSALKYALLTQPEDVPQATKQKLAAILAKYPAYRPEV</sequence>
<name>MTAP_GLOVI</name>
<comment type="function">
    <text evidence="1">Catalyzes the reversible phosphorylation of S-methyl-5'-thioadenosine (MTA) to adenine and 5-methylthioribose-1-phosphate. Involved in the breakdown of MTA, a major by-product of polyamine biosynthesis. Responsible for the first step in the methionine salvage pathway after MTA has been generated from S-adenosylmethionine. Has broad substrate specificity with 6-aminopurine nucleosides as preferred substrates.</text>
</comment>
<comment type="catalytic activity">
    <reaction evidence="1">
        <text>S-methyl-5'-thioadenosine + phosphate = 5-(methylsulfanyl)-alpha-D-ribose 1-phosphate + adenine</text>
        <dbReference type="Rhea" id="RHEA:11852"/>
        <dbReference type="ChEBI" id="CHEBI:16708"/>
        <dbReference type="ChEBI" id="CHEBI:17509"/>
        <dbReference type="ChEBI" id="CHEBI:43474"/>
        <dbReference type="ChEBI" id="CHEBI:58533"/>
        <dbReference type="EC" id="2.4.2.28"/>
    </reaction>
</comment>
<comment type="pathway">
    <text evidence="1">Amino-acid biosynthesis; L-methionine biosynthesis via salvage pathway; S-methyl-5-thio-alpha-D-ribose 1-phosphate from S-methyl-5'-thioadenosine (phosphorylase route): step 1/1.</text>
</comment>
<comment type="subunit">
    <text evidence="1">Homohexamer. Dimer of a homotrimer.</text>
</comment>
<comment type="similarity">
    <text evidence="1">Belongs to the PNP/MTAP phosphorylase family. MTAP subfamily.</text>
</comment>
<feature type="chain" id="PRO_0000415093" description="S-methyl-5'-thioadenosine phosphorylase">
    <location>
        <begin position="1"/>
        <end position="299"/>
    </location>
</feature>
<feature type="binding site" evidence="1">
    <location>
        <position position="14"/>
    </location>
    <ligand>
        <name>phosphate</name>
        <dbReference type="ChEBI" id="CHEBI:43474"/>
    </ligand>
</feature>
<feature type="binding site" evidence="1">
    <location>
        <begin position="56"/>
        <end position="57"/>
    </location>
    <ligand>
        <name>phosphate</name>
        <dbReference type="ChEBI" id="CHEBI:43474"/>
    </ligand>
</feature>
<feature type="binding site" evidence="1">
    <location>
        <begin position="89"/>
        <end position="90"/>
    </location>
    <ligand>
        <name>phosphate</name>
        <dbReference type="ChEBI" id="CHEBI:43474"/>
    </ligand>
</feature>
<feature type="binding site" evidence="1">
    <location>
        <position position="191"/>
    </location>
    <ligand>
        <name>substrate</name>
    </ligand>
</feature>
<feature type="binding site" evidence="1">
    <location>
        <position position="192"/>
    </location>
    <ligand>
        <name>phosphate</name>
        <dbReference type="ChEBI" id="CHEBI:43474"/>
    </ligand>
</feature>
<feature type="binding site" evidence="1">
    <location>
        <begin position="215"/>
        <end position="217"/>
    </location>
    <ligand>
        <name>substrate</name>
    </ligand>
</feature>
<feature type="site" description="Important for substrate specificity" evidence="1">
    <location>
        <position position="173"/>
    </location>
</feature>
<feature type="site" description="Important for substrate specificity" evidence="1">
    <location>
        <position position="228"/>
    </location>
</feature>
<protein>
    <recommendedName>
        <fullName evidence="1">S-methyl-5'-thioadenosine phosphorylase</fullName>
        <ecNumber evidence="1">2.4.2.28</ecNumber>
    </recommendedName>
    <alternativeName>
        <fullName evidence="1">5'-methylthioadenosine phosphorylase</fullName>
        <shortName evidence="1">MTA phosphorylase</shortName>
        <shortName evidence="1">MTAP</shortName>
    </alternativeName>
</protein>
<proteinExistence type="inferred from homology"/>
<accession>Q7NHW1</accession>
<organism>
    <name type="scientific">Gloeobacter violaceus (strain ATCC 29082 / PCC 7421)</name>
    <dbReference type="NCBI Taxonomy" id="251221"/>
    <lineage>
        <taxon>Bacteria</taxon>
        <taxon>Bacillati</taxon>
        <taxon>Cyanobacteriota</taxon>
        <taxon>Cyanophyceae</taxon>
        <taxon>Gloeobacterales</taxon>
        <taxon>Gloeobacteraceae</taxon>
        <taxon>Gloeobacter</taxon>
    </lineage>
</organism>
<dbReference type="EC" id="2.4.2.28" evidence="1"/>
<dbReference type="EMBL" id="BA000045">
    <property type="protein sequence ID" value="BAC90365.1"/>
    <property type="molecule type" value="Genomic_DNA"/>
</dbReference>
<dbReference type="RefSeq" id="NP_925370.1">
    <property type="nucleotide sequence ID" value="NC_005125.1"/>
</dbReference>
<dbReference type="RefSeq" id="WP_011142419.1">
    <property type="nucleotide sequence ID" value="NC_005125.1"/>
</dbReference>
<dbReference type="SMR" id="Q7NHW1"/>
<dbReference type="FunCoup" id="Q7NHW1">
    <property type="interactions" value="254"/>
</dbReference>
<dbReference type="STRING" id="251221.gene:10759921"/>
<dbReference type="EnsemblBacteria" id="BAC90365">
    <property type="protein sequence ID" value="BAC90365"/>
    <property type="gene ID" value="BAC90365"/>
</dbReference>
<dbReference type="KEGG" id="gvi:gll2424"/>
<dbReference type="PATRIC" id="fig|251221.4.peg.2461"/>
<dbReference type="eggNOG" id="COG0005">
    <property type="taxonomic scope" value="Bacteria"/>
</dbReference>
<dbReference type="HOGENOM" id="CLU_054456_0_1_3"/>
<dbReference type="InParanoid" id="Q7NHW1"/>
<dbReference type="OrthoDB" id="1523230at2"/>
<dbReference type="PhylomeDB" id="Q7NHW1"/>
<dbReference type="UniPathway" id="UPA00904">
    <property type="reaction ID" value="UER00873"/>
</dbReference>
<dbReference type="Proteomes" id="UP000000557">
    <property type="component" value="Chromosome"/>
</dbReference>
<dbReference type="GO" id="GO:0005829">
    <property type="term" value="C:cytosol"/>
    <property type="evidence" value="ECO:0000318"/>
    <property type="project" value="GO_Central"/>
</dbReference>
<dbReference type="GO" id="GO:0017061">
    <property type="term" value="F:S-methyl-5-thioadenosine phosphorylase activity"/>
    <property type="evidence" value="ECO:0000318"/>
    <property type="project" value="GO_Central"/>
</dbReference>
<dbReference type="GO" id="GO:0019509">
    <property type="term" value="P:L-methionine salvage from methylthioadenosine"/>
    <property type="evidence" value="ECO:0000318"/>
    <property type="project" value="GO_Central"/>
</dbReference>
<dbReference type="GO" id="GO:0006166">
    <property type="term" value="P:purine ribonucleoside salvage"/>
    <property type="evidence" value="ECO:0007669"/>
    <property type="project" value="UniProtKB-KW"/>
</dbReference>
<dbReference type="CDD" id="cd09010">
    <property type="entry name" value="MTAP_SsMTAPII_like_MTIP"/>
    <property type="match status" value="1"/>
</dbReference>
<dbReference type="FunFam" id="3.40.50.1580:FF:000008">
    <property type="entry name" value="S-methyl-5'-thioadenosine phosphorylase"/>
    <property type="match status" value="1"/>
</dbReference>
<dbReference type="Gene3D" id="3.40.50.1580">
    <property type="entry name" value="Nucleoside phosphorylase domain"/>
    <property type="match status" value="1"/>
</dbReference>
<dbReference type="HAMAP" id="MF_01963">
    <property type="entry name" value="MTAP"/>
    <property type="match status" value="1"/>
</dbReference>
<dbReference type="InterPro" id="IPR010044">
    <property type="entry name" value="MTAP"/>
</dbReference>
<dbReference type="InterPro" id="IPR000845">
    <property type="entry name" value="Nucleoside_phosphorylase_d"/>
</dbReference>
<dbReference type="InterPro" id="IPR035994">
    <property type="entry name" value="Nucleoside_phosphorylase_sf"/>
</dbReference>
<dbReference type="InterPro" id="IPR018099">
    <property type="entry name" value="Purine_phosphorylase-2_CS"/>
</dbReference>
<dbReference type="NCBIfam" id="TIGR01694">
    <property type="entry name" value="MTAP"/>
    <property type="match status" value="1"/>
</dbReference>
<dbReference type="NCBIfam" id="NF005657">
    <property type="entry name" value="PRK07432.1"/>
    <property type="match status" value="1"/>
</dbReference>
<dbReference type="PANTHER" id="PTHR42679">
    <property type="entry name" value="S-METHYL-5'-THIOADENOSINE PHOSPHORYLASE"/>
    <property type="match status" value="1"/>
</dbReference>
<dbReference type="PANTHER" id="PTHR42679:SF2">
    <property type="entry name" value="S-METHYL-5'-THIOADENOSINE PHOSPHORYLASE"/>
    <property type="match status" value="1"/>
</dbReference>
<dbReference type="Pfam" id="PF01048">
    <property type="entry name" value="PNP_UDP_1"/>
    <property type="match status" value="1"/>
</dbReference>
<dbReference type="SUPFAM" id="SSF53167">
    <property type="entry name" value="Purine and uridine phosphorylases"/>
    <property type="match status" value="1"/>
</dbReference>
<dbReference type="PROSITE" id="PS01240">
    <property type="entry name" value="PNP_MTAP_2"/>
    <property type="match status" value="1"/>
</dbReference>
<gene>
    <name evidence="1" type="primary">mtnP</name>
    <name type="ordered locus">gll2424</name>
</gene>
<keyword id="KW-0328">Glycosyltransferase</keyword>
<keyword id="KW-0660">Purine salvage</keyword>
<keyword id="KW-1185">Reference proteome</keyword>
<keyword id="KW-0808">Transferase</keyword>